<name>I15RA_HUMAN</name>
<sequence>MAPRRARGCRTLGLPALLLLLLLRPPATRGITCPPPMSVEHADIWVKSYSLYSRERYICNSGFKRKAGTSSLTECVLNKATNVAHWTTPSLKCIRDPALVHQRPAPPSTVTTAGVTPQPESLSPSGKEPAASSPSSNNTAATTAAIVPGSQLMPSKSPSTGTTEISSHESSHGTPSQTTAKNWELTASASHQPPGVYPQGHSDTTVAISTSTVLLCGLSAVSLLACYLKSRQTPPLASVEMEAMEALPVTWGTSSRDEDLENCSHHL</sequence>
<feature type="signal peptide" evidence="2">
    <location>
        <begin position="1"/>
        <end position="30"/>
    </location>
</feature>
<feature type="chain" id="PRO_0000011044" description="Interleukin-15 receptor subunit alpha">
    <location>
        <begin position="31"/>
        <end position="267"/>
    </location>
</feature>
<feature type="chain" id="PRO_0000333855" description="Soluble interleukin-15 receptor subunit alpha">
    <location>
        <begin position="31"/>
        <end status="unknown"/>
    </location>
</feature>
<feature type="topological domain" description="Extracellular" evidence="2">
    <location>
        <begin position="31"/>
        <end position="205"/>
    </location>
</feature>
<feature type="transmembrane region" description="Helical" evidence="2">
    <location>
        <begin position="206"/>
        <end position="228"/>
    </location>
</feature>
<feature type="topological domain" description="Cytoplasmic" evidence="2">
    <location>
        <begin position="229"/>
        <end position="267"/>
    </location>
</feature>
<feature type="domain" description="Sushi" evidence="3">
    <location>
        <begin position="31"/>
        <end position="95"/>
    </location>
</feature>
<feature type="region of interest" description="Disordered" evidence="4">
    <location>
        <begin position="102"/>
        <end position="178"/>
    </location>
</feature>
<feature type="compositionally biased region" description="Polar residues" evidence="4">
    <location>
        <begin position="108"/>
        <end position="124"/>
    </location>
</feature>
<feature type="compositionally biased region" description="Low complexity" evidence="4">
    <location>
        <begin position="129"/>
        <end position="145"/>
    </location>
</feature>
<feature type="compositionally biased region" description="Polar residues" evidence="4">
    <location>
        <begin position="152"/>
        <end position="165"/>
    </location>
</feature>
<feature type="glycosylation site" description="N-linked (GlcNAc...) asparagine" evidence="2">
    <location>
        <position position="137"/>
    </location>
</feature>
<feature type="disulfide bond">
    <location>
        <begin position="33"/>
        <end position="75"/>
    </location>
</feature>
<feature type="disulfide bond">
    <location>
        <begin position="59"/>
        <end position="93"/>
    </location>
</feature>
<feature type="splice variant" id="VSP_055406" description="In isoform 9." evidence="14">
    <location>
        <begin position="1"/>
        <end position="36"/>
    </location>
</feature>
<feature type="splice variant" id="VSP_012623" description="In isoform 7 and isoform 8." evidence="16">
    <location>
        <begin position="30"/>
        <end position="127"/>
    </location>
</feature>
<feature type="splice variant" id="VSP_012624" description="In isoform 5 and isoform 6." evidence="16">
    <location>
        <begin position="31"/>
        <end position="95"/>
    </location>
</feature>
<feature type="splice variant" id="VSP_012625" description="In isoform 2 and isoform 4." evidence="13 15">
    <original>RDPALVHQRPAPPSTVTTAGVTPQPESLSPSGKE</original>
    <variation>K</variation>
    <location>
        <begin position="95"/>
        <end position="128"/>
    </location>
</feature>
<feature type="splice variant" id="VSP_012626" description="In isoform 3, isoform 4, isoform 6 and isoform 8." evidence="15">
    <original>QTPPLASVEMEAMEALPVTWGTSSRDEDLENCSHHL</original>
    <variation>ASVCSCHPRSAGHTCSVGSVC</variation>
    <location>
        <begin position="232"/>
        <end position="267"/>
    </location>
</feature>
<feature type="sequence variant" id="VAR_020967" description="In dbSNP:rs2228059." evidence="9 11 12">
    <original>N</original>
    <variation>T</variation>
    <location>
        <position position="182"/>
    </location>
</feature>
<feature type="sequence conflict" description="In Ref. 8; AAH74726." evidence="16" ref="8">
    <original>G</original>
    <variation>D</variation>
    <location>
        <position position="200"/>
    </location>
</feature>
<feature type="strand" evidence="17">
    <location>
        <begin position="42"/>
        <end position="44"/>
    </location>
</feature>
<feature type="strand" evidence="17">
    <location>
        <begin position="54"/>
        <end position="59"/>
    </location>
</feature>
<feature type="strand" evidence="17">
    <location>
        <begin position="63"/>
        <end position="65"/>
    </location>
</feature>
<feature type="strand" evidence="17">
    <location>
        <begin position="72"/>
        <end position="77"/>
    </location>
</feature>
<feature type="turn" evidence="17">
    <location>
        <begin position="79"/>
        <end position="81"/>
    </location>
</feature>
<feature type="strand" evidence="17">
    <location>
        <begin position="84"/>
        <end position="86"/>
    </location>
</feature>
<feature type="strand" evidence="17">
    <location>
        <begin position="93"/>
        <end position="95"/>
    </location>
</feature>
<feature type="helix" evidence="17">
    <location>
        <begin position="97"/>
        <end position="102"/>
    </location>
</feature>
<keyword id="KW-0002">3D-structure</keyword>
<keyword id="KW-0025">Alternative splicing</keyword>
<keyword id="KW-0968">Cytoplasmic vesicle</keyword>
<keyword id="KW-1015">Disulfide bond</keyword>
<keyword id="KW-0256">Endoplasmic reticulum</keyword>
<keyword id="KW-0325">Glycoprotein</keyword>
<keyword id="KW-0333">Golgi apparatus</keyword>
<keyword id="KW-0472">Membrane</keyword>
<keyword id="KW-0539">Nucleus</keyword>
<keyword id="KW-0597">Phosphoprotein</keyword>
<keyword id="KW-1267">Proteomics identification</keyword>
<keyword id="KW-0675">Receptor</keyword>
<keyword id="KW-1185">Reference proteome</keyword>
<keyword id="KW-0964">Secreted</keyword>
<keyword id="KW-0732">Signal</keyword>
<keyword id="KW-0768">Sushi</keyword>
<keyword id="KW-0812">Transmembrane</keyword>
<keyword id="KW-1133">Transmembrane helix</keyword>
<organism>
    <name type="scientific">Homo sapiens</name>
    <name type="common">Human</name>
    <dbReference type="NCBI Taxonomy" id="9606"/>
    <lineage>
        <taxon>Eukaryota</taxon>
        <taxon>Metazoa</taxon>
        <taxon>Chordata</taxon>
        <taxon>Craniata</taxon>
        <taxon>Vertebrata</taxon>
        <taxon>Euteleostomi</taxon>
        <taxon>Mammalia</taxon>
        <taxon>Eutheria</taxon>
        <taxon>Euarchontoglires</taxon>
        <taxon>Primates</taxon>
        <taxon>Haplorrhini</taxon>
        <taxon>Catarrhini</taxon>
        <taxon>Hominidae</taxon>
        <taxon>Homo</taxon>
    </lineage>
</organism>
<protein>
    <recommendedName>
        <fullName>Interleukin-15 receptor subunit alpha</fullName>
        <shortName>IL-15 receptor subunit alpha</shortName>
        <shortName>IL-15R-alpha</shortName>
        <shortName>IL-15RA</shortName>
    </recommendedName>
    <cdAntigenName>CD215</cdAntigenName>
    <component>
        <recommendedName>
            <fullName>Soluble interleukin-15 receptor subunit alpha</fullName>
            <shortName>sIL-15 receptor subunit alpha</shortName>
            <shortName>sIL-15R-alpha</shortName>
            <shortName>sIL-15RA</shortName>
        </recommendedName>
    </component>
</protein>
<reference key="1">
    <citation type="journal article" date="1995" name="J. Biol. Chem.">
        <title>Functional characterization of the human interleukin-15 receptor alpha chain and close linkage of IL15RA and IL2RA genes.</title>
        <authorList>
            <person name="Anderson D.M."/>
            <person name="Kumaki S."/>
            <person name="Ahdieh M."/>
            <person name="Bertles J."/>
            <person name="Tometsko M."/>
            <person name="Loomis A."/>
            <person name="Giri J."/>
            <person name="Copeland N.G."/>
            <person name="Gilbert D.J."/>
            <person name="Jenkins N.A."/>
            <person name="Valentine V."/>
            <person name="Shapiro D.N."/>
            <person name="Morris S.W."/>
            <person name="Park L.S."/>
            <person name="Cosman D."/>
        </authorList>
    </citation>
    <scope>NUCLEOTIDE SEQUENCE [MRNA] (ISOFORMS 1; 2 AND 3)</scope>
    <scope>FUNCTION</scope>
    <scope>TISSUE SPECIFICITY</scope>
    <scope>VARIANT THR-182</scope>
    <source>
        <tissue>Bone marrow stroma</tissue>
    </source>
</reference>
<reference key="2">
    <citation type="submission" date="2004-06" db="EMBL/GenBank/DDBJ databases">
        <title>Cloning of human full open reading frames in Gateway(TM) system entry vector (pDONR201).</title>
        <authorList>
            <person name="Ebert L."/>
            <person name="Schick M."/>
            <person name="Neubert P."/>
            <person name="Schatten R."/>
            <person name="Henze S."/>
            <person name="Korn B."/>
        </authorList>
    </citation>
    <scope>NUCLEOTIDE SEQUENCE [LARGE SCALE MRNA] (ISOFORM 1)</scope>
</reference>
<reference key="3">
    <citation type="submission" date="2003-06" db="EMBL/GenBank/DDBJ databases">
        <authorList>
            <consortium name="SeattleSNPs variation discovery resource"/>
        </authorList>
    </citation>
    <scope>NUCLEOTIDE SEQUENCE [GENOMIC DNA]</scope>
    <scope>VARIANT THR-182</scope>
</reference>
<reference key="4">
    <citation type="journal article" date="2004" name="Nat. Genet.">
        <title>Complete sequencing and characterization of 21,243 full-length human cDNAs.</title>
        <authorList>
            <person name="Ota T."/>
            <person name="Suzuki Y."/>
            <person name="Nishikawa T."/>
            <person name="Otsuki T."/>
            <person name="Sugiyama T."/>
            <person name="Irie R."/>
            <person name="Wakamatsu A."/>
            <person name="Hayashi K."/>
            <person name="Sato H."/>
            <person name="Nagai K."/>
            <person name="Kimura K."/>
            <person name="Makita H."/>
            <person name="Sekine M."/>
            <person name="Obayashi M."/>
            <person name="Nishi T."/>
            <person name="Shibahara T."/>
            <person name="Tanaka T."/>
            <person name="Ishii S."/>
            <person name="Yamamoto J."/>
            <person name="Saito K."/>
            <person name="Kawai Y."/>
            <person name="Isono Y."/>
            <person name="Nakamura Y."/>
            <person name="Nagahari K."/>
            <person name="Murakami K."/>
            <person name="Yasuda T."/>
            <person name="Iwayanagi T."/>
            <person name="Wagatsuma M."/>
            <person name="Shiratori A."/>
            <person name="Sudo H."/>
            <person name="Hosoiri T."/>
            <person name="Kaku Y."/>
            <person name="Kodaira H."/>
            <person name="Kondo H."/>
            <person name="Sugawara M."/>
            <person name="Takahashi M."/>
            <person name="Kanda K."/>
            <person name="Yokoi T."/>
            <person name="Furuya T."/>
            <person name="Kikkawa E."/>
            <person name="Omura Y."/>
            <person name="Abe K."/>
            <person name="Kamihara K."/>
            <person name="Katsuta N."/>
            <person name="Sato K."/>
            <person name="Tanikawa M."/>
            <person name="Yamazaki M."/>
            <person name="Ninomiya K."/>
            <person name="Ishibashi T."/>
            <person name="Yamashita H."/>
            <person name="Murakawa K."/>
            <person name="Fujimori K."/>
            <person name="Tanai H."/>
            <person name="Kimata M."/>
            <person name="Watanabe M."/>
            <person name="Hiraoka S."/>
            <person name="Chiba Y."/>
            <person name="Ishida S."/>
            <person name="Ono Y."/>
            <person name="Takiguchi S."/>
            <person name="Watanabe S."/>
            <person name="Yosida M."/>
            <person name="Hotuta T."/>
            <person name="Kusano J."/>
            <person name="Kanehori K."/>
            <person name="Takahashi-Fujii A."/>
            <person name="Hara H."/>
            <person name="Tanase T.-O."/>
            <person name="Nomura Y."/>
            <person name="Togiya S."/>
            <person name="Komai F."/>
            <person name="Hara R."/>
            <person name="Takeuchi K."/>
            <person name="Arita M."/>
            <person name="Imose N."/>
            <person name="Musashino K."/>
            <person name="Yuuki H."/>
            <person name="Oshima A."/>
            <person name="Sasaki N."/>
            <person name="Aotsuka S."/>
            <person name="Yoshikawa Y."/>
            <person name="Matsunawa H."/>
            <person name="Ichihara T."/>
            <person name="Shiohata N."/>
            <person name="Sano S."/>
            <person name="Moriya S."/>
            <person name="Momiyama H."/>
            <person name="Satoh N."/>
            <person name="Takami S."/>
            <person name="Terashima Y."/>
            <person name="Suzuki O."/>
            <person name="Nakagawa S."/>
            <person name="Senoh A."/>
            <person name="Mizoguchi H."/>
            <person name="Goto Y."/>
            <person name="Shimizu F."/>
            <person name="Wakebe H."/>
            <person name="Hishigaki H."/>
            <person name="Watanabe T."/>
            <person name="Sugiyama A."/>
            <person name="Takemoto M."/>
            <person name="Kawakami B."/>
            <person name="Yamazaki M."/>
            <person name="Watanabe K."/>
            <person name="Kumagai A."/>
            <person name="Itakura S."/>
            <person name="Fukuzumi Y."/>
            <person name="Fujimori Y."/>
            <person name="Komiyama M."/>
            <person name="Tashiro H."/>
            <person name="Tanigami A."/>
            <person name="Fujiwara T."/>
            <person name="Ono T."/>
            <person name="Yamada K."/>
            <person name="Fujii Y."/>
            <person name="Ozaki K."/>
            <person name="Hirao M."/>
            <person name="Ohmori Y."/>
            <person name="Kawabata A."/>
            <person name="Hikiji T."/>
            <person name="Kobatake N."/>
            <person name="Inagaki H."/>
            <person name="Ikema Y."/>
            <person name="Okamoto S."/>
            <person name="Okitani R."/>
            <person name="Kawakami T."/>
            <person name="Noguchi S."/>
            <person name="Itoh T."/>
            <person name="Shigeta K."/>
            <person name="Senba T."/>
            <person name="Matsumura K."/>
            <person name="Nakajima Y."/>
            <person name="Mizuno T."/>
            <person name="Morinaga M."/>
            <person name="Sasaki M."/>
            <person name="Togashi T."/>
            <person name="Oyama M."/>
            <person name="Hata H."/>
            <person name="Watanabe M."/>
            <person name="Komatsu T."/>
            <person name="Mizushima-Sugano J."/>
            <person name="Satoh T."/>
            <person name="Shirai Y."/>
            <person name="Takahashi Y."/>
            <person name="Nakagawa K."/>
            <person name="Okumura K."/>
            <person name="Nagase T."/>
            <person name="Nomura N."/>
            <person name="Kikuchi H."/>
            <person name="Masuho Y."/>
            <person name="Yamashita R."/>
            <person name="Nakai K."/>
            <person name="Yada T."/>
            <person name="Nakamura Y."/>
            <person name="Ohara O."/>
            <person name="Isogai T."/>
            <person name="Sugano S."/>
        </authorList>
    </citation>
    <scope>NUCLEOTIDE SEQUENCE [LARGE SCALE MRNA] (ISOFORM 2)</scope>
    <source>
        <tissue>Trachea</tissue>
    </source>
</reference>
<reference key="5">
    <citation type="journal article" date="2004" name="Nature">
        <title>The DNA sequence and comparative analysis of human chromosome 10.</title>
        <authorList>
            <person name="Deloukas P."/>
            <person name="Earthrowl M.E."/>
            <person name="Grafham D.V."/>
            <person name="Rubenfield M."/>
            <person name="French L."/>
            <person name="Steward C.A."/>
            <person name="Sims S.K."/>
            <person name="Jones M.C."/>
            <person name="Searle S."/>
            <person name="Scott C."/>
            <person name="Howe K."/>
            <person name="Hunt S.E."/>
            <person name="Andrews T.D."/>
            <person name="Gilbert J.G.R."/>
            <person name="Swarbreck D."/>
            <person name="Ashurst J.L."/>
            <person name="Taylor A."/>
            <person name="Battles J."/>
            <person name="Bird C.P."/>
            <person name="Ainscough R."/>
            <person name="Almeida J.P."/>
            <person name="Ashwell R.I.S."/>
            <person name="Ambrose K.D."/>
            <person name="Babbage A.K."/>
            <person name="Bagguley C.L."/>
            <person name="Bailey J."/>
            <person name="Banerjee R."/>
            <person name="Bates K."/>
            <person name="Beasley H."/>
            <person name="Bray-Allen S."/>
            <person name="Brown A.J."/>
            <person name="Brown J.Y."/>
            <person name="Burford D.C."/>
            <person name="Burrill W."/>
            <person name="Burton J."/>
            <person name="Cahill P."/>
            <person name="Camire D."/>
            <person name="Carter N.P."/>
            <person name="Chapman J.C."/>
            <person name="Clark S.Y."/>
            <person name="Clarke G."/>
            <person name="Clee C.M."/>
            <person name="Clegg S."/>
            <person name="Corby N."/>
            <person name="Coulson A."/>
            <person name="Dhami P."/>
            <person name="Dutta I."/>
            <person name="Dunn M."/>
            <person name="Faulkner L."/>
            <person name="Frankish A."/>
            <person name="Frankland J.A."/>
            <person name="Garner P."/>
            <person name="Garnett J."/>
            <person name="Gribble S."/>
            <person name="Griffiths C."/>
            <person name="Grocock R."/>
            <person name="Gustafson E."/>
            <person name="Hammond S."/>
            <person name="Harley J.L."/>
            <person name="Hart E."/>
            <person name="Heath P.D."/>
            <person name="Ho T.P."/>
            <person name="Hopkins B."/>
            <person name="Horne J."/>
            <person name="Howden P.J."/>
            <person name="Huckle E."/>
            <person name="Hynds C."/>
            <person name="Johnson C."/>
            <person name="Johnson D."/>
            <person name="Kana A."/>
            <person name="Kay M."/>
            <person name="Kimberley A.M."/>
            <person name="Kershaw J.K."/>
            <person name="Kokkinaki M."/>
            <person name="Laird G.K."/>
            <person name="Lawlor S."/>
            <person name="Lee H.M."/>
            <person name="Leongamornlert D.A."/>
            <person name="Laird G."/>
            <person name="Lloyd C."/>
            <person name="Lloyd D.M."/>
            <person name="Loveland J."/>
            <person name="Lovell J."/>
            <person name="McLaren S."/>
            <person name="McLay K.E."/>
            <person name="McMurray A."/>
            <person name="Mashreghi-Mohammadi M."/>
            <person name="Matthews L."/>
            <person name="Milne S."/>
            <person name="Nickerson T."/>
            <person name="Nguyen M."/>
            <person name="Overton-Larty E."/>
            <person name="Palmer S.A."/>
            <person name="Pearce A.V."/>
            <person name="Peck A.I."/>
            <person name="Pelan S."/>
            <person name="Phillimore B."/>
            <person name="Porter K."/>
            <person name="Rice C.M."/>
            <person name="Rogosin A."/>
            <person name="Ross M.T."/>
            <person name="Sarafidou T."/>
            <person name="Sehra H.K."/>
            <person name="Shownkeen R."/>
            <person name="Skuce C.D."/>
            <person name="Smith M."/>
            <person name="Standring L."/>
            <person name="Sycamore N."/>
            <person name="Tester J."/>
            <person name="Thorpe A."/>
            <person name="Torcasso W."/>
            <person name="Tracey A."/>
            <person name="Tromans A."/>
            <person name="Tsolas J."/>
            <person name="Wall M."/>
            <person name="Walsh J."/>
            <person name="Wang H."/>
            <person name="Weinstock K."/>
            <person name="West A.P."/>
            <person name="Willey D.L."/>
            <person name="Whitehead S.L."/>
            <person name="Wilming L."/>
            <person name="Wray P.W."/>
            <person name="Young L."/>
            <person name="Chen Y."/>
            <person name="Lovering R.C."/>
            <person name="Moschonas N.K."/>
            <person name="Siebert R."/>
            <person name="Fechtel K."/>
            <person name="Bentley D."/>
            <person name="Durbin R.M."/>
            <person name="Hubbard T."/>
            <person name="Doucette-Stamm L."/>
            <person name="Beck S."/>
            <person name="Smith D.R."/>
            <person name="Rogers J."/>
        </authorList>
    </citation>
    <scope>NUCLEOTIDE SEQUENCE [LARGE SCALE GENOMIC DNA]</scope>
</reference>
<reference key="6">
    <citation type="submission" date="2005-09" db="EMBL/GenBank/DDBJ databases">
        <authorList>
            <person name="Mural R.J."/>
            <person name="Istrail S."/>
            <person name="Sutton G.G."/>
            <person name="Florea L."/>
            <person name="Halpern A.L."/>
            <person name="Mobarry C.M."/>
            <person name="Lippert R."/>
            <person name="Walenz B."/>
            <person name="Shatkay H."/>
            <person name="Dew I."/>
            <person name="Miller J.R."/>
            <person name="Flanigan M.J."/>
            <person name="Edwards N.J."/>
            <person name="Bolanos R."/>
            <person name="Fasulo D."/>
            <person name="Halldorsson B.V."/>
            <person name="Hannenhalli S."/>
            <person name="Turner R."/>
            <person name="Yooseph S."/>
            <person name="Lu F."/>
            <person name="Nusskern D.R."/>
            <person name="Shue B.C."/>
            <person name="Zheng X.H."/>
            <person name="Zhong F."/>
            <person name="Delcher A.L."/>
            <person name="Huson D.H."/>
            <person name="Kravitz S.A."/>
            <person name="Mouchard L."/>
            <person name="Reinert K."/>
            <person name="Remington K.A."/>
            <person name="Clark A.G."/>
            <person name="Waterman M.S."/>
            <person name="Eichler E.E."/>
            <person name="Adams M.D."/>
            <person name="Hunkapiller M.W."/>
            <person name="Myers E.W."/>
            <person name="Venter J.C."/>
        </authorList>
    </citation>
    <scope>NUCLEOTIDE SEQUENCE [LARGE SCALE GENOMIC DNA]</scope>
</reference>
<reference key="7">
    <citation type="journal article" date="2004" name="Genome Res.">
        <title>The status, quality, and expansion of the NIH full-length cDNA project: the Mammalian Gene Collection (MGC).</title>
        <authorList>
            <consortium name="The MGC Project Team"/>
        </authorList>
    </citation>
    <scope>NUCLEOTIDE SEQUENCE [LARGE SCALE MRNA] (ISOFORMS 1 AND 9)</scope>
    <scope>VARIANT THR-182</scope>
    <source>
        <tissue>Brain</tissue>
    </source>
</reference>
<reference key="8">
    <citation type="journal article" date="1997" name="Genome Res.">
        <title>Large-scale concatenation cDNA sequencing.</title>
        <authorList>
            <person name="Yu W."/>
            <person name="Andersson B."/>
            <person name="Worley K.C."/>
            <person name="Muzny D.M."/>
            <person name="Ding Y."/>
            <person name="Liu W."/>
            <person name="Ricafrente J.Y."/>
            <person name="Wentland M.A."/>
            <person name="Lennon G."/>
            <person name="Gibbs R.A."/>
        </authorList>
    </citation>
    <scope>NUCLEOTIDE SEQUENCE [LARGE SCALE MRNA] OF 30-267 (ISOFORM 1)</scope>
    <source>
        <tissue>Brain</tissue>
    </source>
</reference>
<reference key="9">
    <citation type="journal article" date="1999" name="J. Biol. Chem.">
        <title>Natural splicing of exon 2 of human interleukin-15 receptor alpha-chain mRNA results in a shortened form with a distinct pattern of expression.</title>
        <authorList>
            <person name="Dubois S."/>
            <person name="Magrangeas F."/>
            <person name="Lehours P."/>
            <person name="Raher S."/>
            <person name="Bernard J."/>
            <person name="Boisteau O."/>
            <person name="Leroy S."/>
            <person name="Minvielle S."/>
            <person name="Godard A."/>
            <person name="Jacques Y."/>
        </authorList>
    </citation>
    <scope>ALTERNATIVE SPLICING (ISOFORMS 1; 2; 3; 4; 5; 6; 7 AND 8)</scope>
    <scope>FUNCTION</scope>
    <scope>SUBCELLULAR LOCATION</scope>
    <scope>TISSUE SPECIFICITY</scope>
    <scope>GLYCOSYLATION</scope>
</reference>
<reference key="10">
    <citation type="journal article" date="2001" name="J. Immunol.">
        <title>The IL-15R alpha chain signals through association with Syk in human B cells.</title>
        <authorList>
            <person name="Bulanova E."/>
            <person name="Budagian V."/>
            <person name="Pohl T."/>
            <person name="Krause H."/>
            <person name="Durkop H."/>
            <person name="Paus R."/>
            <person name="Bulfone-Paus S."/>
        </authorList>
    </citation>
    <scope>RETRACTED PAPER</scope>
</reference>
<reference key="11">
    <citation type="journal article" date="2011" name="J. Immunol.">
        <title>The IL-15R alpha chain signals through association with Syk in human B cells.</title>
        <authorList>
            <person name="Pohl T."/>
            <person name="Krause H."/>
            <person name="Duerkop H."/>
            <person name="Paus R."/>
            <person name="Bulfone-Paus S."/>
        </authorList>
    </citation>
    <scope>RETRACTION NOTICE OF PUBMED:11714793</scope>
</reference>
<reference key="12">
    <citation type="journal article" date="2002" name="Ann. N. Y. Acad. Sci.">
        <title>Expression of IL-15 and IL-15 receptor isoforms in select structures of human fetal brain.</title>
        <authorList>
            <person name="Kurowska M."/>
            <person name="Rudnicka W."/>
            <person name="Maslinska D."/>
            <person name="Maslinski W."/>
        </authorList>
    </citation>
    <scope>TISSUE SPECIFICITY</scope>
</reference>
<reference key="13">
    <citation type="journal article" date="2004" name="J. Biol. Chem.">
        <title>Identification of an interleukin-15alpha receptor-binding site on human interleukin-15.</title>
        <authorList>
            <person name="Bernard J."/>
            <person name="Harb C."/>
            <person name="Mortier E."/>
            <person name="Quemener A."/>
            <person name="Meloen R.H."/>
            <person name="Vermot-Desroches C."/>
            <person name="Wijdeness J."/>
            <person name="van Dijken P."/>
            <person name="Grotzinger J."/>
            <person name="Slootstra J.W."/>
            <person name="Plet A."/>
            <person name="Jacques Y."/>
        </authorList>
    </citation>
    <scope>LIGAND-BINDING</scope>
</reference>
<reference key="14">
    <citation type="journal article" date="2004" name="J. Immunol.">
        <title>Natural, proteolytic release of a soluble form of human IL-15 receptor alpha-chain that behaves as a specific, high affinity IL-15 antagonist.</title>
        <authorList>
            <person name="Mortier E."/>
            <person name="Bernard J."/>
            <person name="Plet A."/>
            <person name="Jacques Y."/>
        </authorList>
    </citation>
    <scope>SUBCELLULAR LOCATION (SOLUBLE INTERLEUKIN-15 RECEPTOR SUBUNIT ALPHA)</scope>
    <scope>PROTEOLYTIC PROCESSING</scope>
    <scope>LIGAND-BINDING</scope>
</reference>
<reference key="15">
    <citation type="journal article" date="2004" name="J. Leukoc. Biol.">
        <title>Interleukin-15 enhances human neutrophil phagocytosis by a Syk-dependent mechanism: importance of the IL-15Ralpha chain.</title>
        <authorList>
            <person name="Ratthe C."/>
            <person name="Girard D."/>
        </authorList>
    </citation>
    <scope>FUNCTION</scope>
    <scope>INTERACTION WITH SYK</scope>
    <scope>SUBCELLULAR LOCATION</scope>
    <scope>TISSUE SPECIFICITY</scope>
</reference>
<reference key="16">
    <citation type="journal article" date="2006" name="J. Biol. Chem.">
        <title>The structure of the interleukin-15 alpha receptor and its implications for ligand binding.</title>
        <authorList>
            <person name="Lorenzen I."/>
            <person name="Dingley A.J."/>
            <person name="Jacques Y."/>
            <person name="Grotzinger J."/>
        </authorList>
    </citation>
    <scope>STRUCTURE BY NMR OF 31-96</scope>
    <scope>DISULFIDE BONDS</scope>
</reference>
<reference key="17">
    <citation type="journal article" date="2007" name="Nat. Immunol.">
        <title>Crystal structure of the IL-15-IL-15Ralpha complex, a cytokine-receptor unit presented in trans.</title>
        <authorList>
            <person name="Chirifu M."/>
            <person name="Hayashi C."/>
            <person name="Nakamura T."/>
            <person name="Toma S."/>
            <person name="Shuto T."/>
            <person name="Kai H."/>
            <person name="Yamagata Y."/>
            <person name="Davis S.J."/>
            <person name="Ikemizu S."/>
        </authorList>
    </citation>
    <scope>X-RAY CRYSTALLOGRAPHY (1.85 ANGSTROMS) OF 31-132 IN COMPLEX WITH IL15</scope>
    <scope>DISULFIDE BONDS</scope>
</reference>
<dbReference type="EMBL" id="U31628">
    <property type="protein sequence ID" value="AAC50312.1"/>
    <property type="molecule type" value="mRNA"/>
</dbReference>
<dbReference type="EMBL" id="CR457064">
    <property type="protein sequence ID" value="CAG33345.1"/>
    <property type="molecule type" value="mRNA"/>
</dbReference>
<dbReference type="EMBL" id="CR542023">
    <property type="protein sequence ID" value="CAG46820.1"/>
    <property type="molecule type" value="mRNA"/>
</dbReference>
<dbReference type="EMBL" id="AY316538">
    <property type="protein sequence ID" value="AAP69528.1"/>
    <property type="molecule type" value="Genomic_DNA"/>
</dbReference>
<dbReference type="EMBL" id="AK304211">
    <property type="protein sequence ID" value="BAG65084.1"/>
    <property type="molecule type" value="mRNA"/>
</dbReference>
<dbReference type="EMBL" id="AL137186">
    <property type="status" value="NOT_ANNOTATED_CDS"/>
    <property type="molecule type" value="Genomic_DNA"/>
</dbReference>
<dbReference type="EMBL" id="CH471072">
    <property type="protein sequence ID" value="EAW86417.1"/>
    <property type="molecule type" value="Genomic_DNA"/>
</dbReference>
<dbReference type="EMBL" id="CH471072">
    <property type="protein sequence ID" value="EAW86418.1"/>
    <property type="molecule type" value="Genomic_DNA"/>
</dbReference>
<dbReference type="EMBL" id="CH471072">
    <property type="protein sequence ID" value="EAW86419.1"/>
    <property type="status" value="ALT_SEQ"/>
    <property type="molecule type" value="Genomic_DNA"/>
</dbReference>
<dbReference type="EMBL" id="BC074726">
    <property type="protein sequence ID" value="AAH74726.1"/>
    <property type="molecule type" value="mRNA"/>
</dbReference>
<dbReference type="EMBL" id="BC107777">
    <property type="protein sequence ID" value="AAI07778.1"/>
    <property type="molecule type" value="mRNA"/>
</dbReference>
<dbReference type="EMBL" id="BC121140">
    <property type="protein sequence ID" value="AAI21141.1"/>
    <property type="molecule type" value="mRNA"/>
</dbReference>
<dbReference type="EMBL" id="BC121141">
    <property type="protein sequence ID" value="AAI21142.1"/>
    <property type="molecule type" value="mRNA"/>
</dbReference>
<dbReference type="EMBL" id="AF035279">
    <property type="protein sequence ID" value="AAB88175.1"/>
    <property type="status" value="ALT_INIT"/>
    <property type="molecule type" value="mRNA"/>
</dbReference>
<dbReference type="CCDS" id="CCDS58069.1">
    <molecule id="Q13261-10"/>
</dbReference>
<dbReference type="CCDS" id="CCDS7074.1">
    <molecule id="Q13261-1"/>
</dbReference>
<dbReference type="CCDS" id="CCDS7075.2">
    <molecule id="Q13261-3"/>
</dbReference>
<dbReference type="RefSeq" id="NP_001230468.1">
    <molecule id="Q13261-10"/>
    <property type="nucleotide sequence ID" value="NM_001243539.2"/>
</dbReference>
<dbReference type="RefSeq" id="NP_001243694.1">
    <property type="nucleotide sequence ID" value="NM_001256765.1"/>
</dbReference>
<dbReference type="RefSeq" id="NP_002180.1">
    <molecule id="Q13261-1"/>
    <property type="nucleotide sequence ID" value="NM_002189.4"/>
</dbReference>
<dbReference type="RefSeq" id="NP_751950.2">
    <molecule id="Q13261-3"/>
    <property type="nucleotide sequence ID" value="NM_172200.3"/>
</dbReference>
<dbReference type="PDB" id="2ERS">
    <property type="method" value="NMR"/>
    <property type="chains" value="A=31-96"/>
</dbReference>
<dbReference type="PDB" id="2Z3Q">
    <property type="method" value="X-ray"/>
    <property type="resolution" value="1.85 A"/>
    <property type="chains" value="B/D=31-132"/>
</dbReference>
<dbReference type="PDB" id="2Z3R">
    <property type="method" value="X-ray"/>
    <property type="resolution" value="2.00 A"/>
    <property type="chains" value="B/D/F/H/J/L/N/P=31-132"/>
</dbReference>
<dbReference type="PDB" id="4GS7">
    <property type="method" value="X-ray"/>
    <property type="resolution" value="2.35 A"/>
    <property type="chains" value="D=30-97"/>
</dbReference>
<dbReference type="PDBsum" id="2ERS"/>
<dbReference type="PDBsum" id="2Z3Q"/>
<dbReference type="PDBsum" id="2Z3R"/>
<dbReference type="PDBsum" id="4GS7"/>
<dbReference type="BMRB" id="Q13261"/>
<dbReference type="SMR" id="Q13261"/>
<dbReference type="BioGRID" id="109814">
    <property type="interactions" value="9"/>
</dbReference>
<dbReference type="ComplexPortal" id="CPX-627">
    <property type="entry name" value="Interleukin-15 receptor-ligand complex"/>
</dbReference>
<dbReference type="CORUM" id="Q13261"/>
<dbReference type="FunCoup" id="Q13261">
    <property type="interactions" value="542"/>
</dbReference>
<dbReference type="IntAct" id="Q13261">
    <property type="interactions" value="9"/>
</dbReference>
<dbReference type="STRING" id="9606.ENSP00000380421"/>
<dbReference type="ChEMBL" id="CHEMBL4665592"/>
<dbReference type="GuidetoPHARMACOLOGY" id="1702"/>
<dbReference type="GlyCosmos" id="Q13261">
    <property type="glycosylation" value="1 site, No reported glycans"/>
</dbReference>
<dbReference type="GlyGen" id="Q13261">
    <property type="glycosylation" value="7 sites, 2 O-linked glycans (6 sites)"/>
</dbReference>
<dbReference type="iPTMnet" id="Q13261"/>
<dbReference type="BioMuta" id="IL15RA"/>
<dbReference type="DMDM" id="59799763"/>
<dbReference type="jPOST" id="Q13261"/>
<dbReference type="MassIVE" id="Q13261"/>
<dbReference type="PeptideAtlas" id="Q13261"/>
<dbReference type="ProteomicsDB" id="59258">
    <molecule id="Q13261-1"/>
</dbReference>
<dbReference type="ProteomicsDB" id="59259">
    <molecule id="Q13261-3"/>
</dbReference>
<dbReference type="ProteomicsDB" id="59260">
    <molecule id="Q13261-4"/>
</dbReference>
<dbReference type="ProteomicsDB" id="59261">
    <molecule id="Q13261-5"/>
</dbReference>
<dbReference type="ProteomicsDB" id="59262">
    <molecule id="Q13261-6"/>
</dbReference>
<dbReference type="ProteomicsDB" id="59264">
    <molecule id="Q13261-8"/>
</dbReference>
<dbReference type="ABCD" id="Q13261">
    <property type="antibodies" value="19 sequenced antibodies"/>
</dbReference>
<dbReference type="Antibodypedia" id="24259">
    <property type="antibodies" value="491 antibodies from 36 providers"/>
</dbReference>
<dbReference type="DNASU" id="3601"/>
<dbReference type="Ensembl" id="ENST00000379971.5">
    <molecule id="Q13261-9"/>
    <property type="protein sequence ID" value="ENSP00000369306.1"/>
    <property type="gene ID" value="ENSG00000134470.21"/>
</dbReference>
<dbReference type="Ensembl" id="ENST00000379977.8">
    <molecule id="Q13261-1"/>
    <property type="protein sequence ID" value="ENSP00000369312.3"/>
    <property type="gene ID" value="ENSG00000134470.21"/>
</dbReference>
<dbReference type="Ensembl" id="ENST00000397250.6">
    <molecule id="Q13261-8"/>
    <property type="protein sequence ID" value="ENSP00000380422.2"/>
    <property type="gene ID" value="ENSG00000134470.21"/>
</dbReference>
<dbReference type="Ensembl" id="ENST00000397255.7">
    <molecule id="Q13261-4"/>
    <property type="protein sequence ID" value="ENSP00000380426.3"/>
    <property type="gene ID" value="ENSG00000134470.21"/>
</dbReference>
<dbReference type="Ensembl" id="ENST00000525219.6">
    <molecule id="Q13261-10"/>
    <property type="protein sequence ID" value="ENSP00000431529.2"/>
    <property type="gene ID" value="ENSG00000134470.21"/>
</dbReference>
<dbReference type="Ensembl" id="ENST00000528354.5">
    <molecule id="Q13261-3"/>
    <property type="protein sequence ID" value="ENSP00000435454.1"/>
    <property type="gene ID" value="ENSG00000134470.21"/>
</dbReference>
<dbReference type="Ensembl" id="ENST00000530685.5">
    <molecule id="Q13261-5"/>
    <property type="protein sequence ID" value="ENSP00000435995.1"/>
    <property type="gene ID" value="ENSG00000134470.21"/>
</dbReference>
<dbReference type="GeneID" id="3601"/>
<dbReference type="KEGG" id="hsa:3601"/>
<dbReference type="MANE-Select" id="ENST00000379977.8">
    <property type="protein sequence ID" value="ENSP00000369312.3"/>
    <property type="RefSeq nucleotide sequence ID" value="NM_002189.4"/>
    <property type="RefSeq protein sequence ID" value="NP_002180.1"/>
</dbReference>
<dbReference type="UCSC" id="uc001iiv.4">
    <molecule id="Q13261-1"/>
    <property type="organism name" value="human"/>
</dbReference>
<dbReference type="AGR" id="HGNC:5978"/>
<dbReference type="CTD" id="3601"/>
<dbReference type="DisGeNET" id="3601"/>
<dbReference type="GeneCards" id="IL15RA"/>
<dbReference type="HGNC" id="HGNC:5978">
    <property type="gene designation" value="IL15RA"/>
</dbReference>
<dbReference type="HPA" id="ENSG00000134470">
    <property type="expression patterns" value="Low tissue specificity"/>
</dbReference>
<dbReference type="MIM" id="601070">
    <property type="type" value="gene"/>
</dbReference>
<dbReference type="neXtProt" id="NX_Q13261"/>
<dbReference type="OpenTargets" id="ENSG00000134470"/>
<dbReference type="PharmGKB" id="PA29791"/>
<dbReference type="VEuPathDB" id="HostDB:ENSG00000134470"/>
<dbReference type="GeneTree" id="ENSGT00390000000121"/>
<dbReference type="HOGENOM" id="CLU_063804_1_0_1"/>
<dbReference type="InParanoid" id="Q13261"/>
<dbReference type="OMA" id="PINCAPA"/>
<dbReference type="OrthoDB" id="9944172at2759"/>
<dbReference type="PAN-GO" id="Q13261">
    <property type="GO annotations" value="3 GO annotations based on evolutionary models"/>
</dbReference>
<dbReference type="PhylomeDB" id="Q13261"/>
<dbReference type="TreeFam" id="TF338443"/>
<dbReference type="PathwayCommons" id="Q13261"/>
<dbReference type="Reactome" id="R-HSA-8983432">
    <property type="pathway name" value="Interleukin-15 signaling"/>
</dbReference>
<dbReference type="SignaLink" id="Q13261"/>
<dbReference type="SIGNOR" id="Q13261"/>
<dbReference type="BioGRID-ORCS" id="3601">
    <property type="hits" value="13 hits in 1171 CRISPR screens"/>
</dbReference>
<dbReference type="EvolutionaryTrace" id="Q13261"/>
<dbReference type="GeneWiki" id="Interleukin_15_receptor,_alpha_subunit"/>
<dbReference type="GenomeRNAi" id="3601"/>
<dbReference type="Pharos" id="Q13261">
    <property type="development level" value="Tbio"/>
</dbReference>
<dbReference type="PRO" id="PR:Q13261"/>
<dbReference type="Proteomes" id="UP000005640">
    <property type="component" value="Chromosome 10"/>
</dbReference>
<dbReference type="RNAct" id="Q13261">
    <property type="molecule type" value="protein"/>
</dbReference>
<dbReference type="Bgee" id="ENSG00000134470">
    <property type="expression patterns" value="Expressed in right lung and 135 other cell types or tissues"/>
</dbReference>
<dbReference type="ExpressionAtlas" id="Q13261">
    <property type="expression patterns" value="baseline and differential"/>
</dbReference>
<dbReference type="GO" id="GO:0009986">
    <property type="term" value="C:cell surface"/>
    <property type="evidence" value="ECO:0000314"/>
    <property type="project" value="UniProtKB"/>
</dbReference>
<dbReference type="GO" id="GO:0030659">
    <property type="term" value="C:cytoplasmic vesicle membrane"/>
    <property type="evidence" value="ECO:0007669"/>
    <property type="project" value="UniProtKB-SubCell"/>
</dbReference>
<dbReference type="GO" id="GO:0005829">
    <property type="term" value="C:cytosol"/>
    <property type="evidence" value="ECO:0000314"/>
    <property type="project" value="HPA"/>
</dbReference>
<dbReference type="GO" id="GO:0005789">
    <property type="term" value="C:endoplasmic reticulum membrane"/>
    <property type="evidence" value="ECO:0007669"/>
    <property type="project" value="UniProtKB-SubCell"/>
</dbReference>
<dbReference type="GO" id="GO:0005768">
    <property type="term" value="C:endosome"/>
    <property type="evidence" value="ECO:0000304"/>
    <property type="project" value="Reactome"/>
</dbReference>
<dbReference type="GO" id="GO:0005576">
    <property type="term" value="C:extracellular region"/>
    <property type="evidence" value="ECO:0007669"/>
    <property type="project" value="UniProtKB-SubCell"/>
</dbReference>
<dbReference type="GO" id="GO:0000139">
    <property type="term" value="C:Golgi membrane"/>
    <property type="evidence" value="ECO:0007669"/>
    <property type="project" value="UniProtKB-SubCell"/>
</dbReference>
<dbReference type="GO" id="GO:0043231">
    <property type="term" value="C:intracellular membrane-bounded organelle"/>
    <property type="evidence" value="ECO:0000314"/>
    <property type="project" value="HPA"/>
</dbReference>
<dbReference type="GO" id="GO:0031965">
    <property type="term" value="C:nuclear membrane"/>
    <property type="evidence" value="ECO:0007669"/>
    <property type="project" value="UniProtKB-SubCell"/>
</dbReference>
<dbReference type="GO" id="GO:0005886">
    <property type="term" value="C:plasma membrane"/>
    <property type="evidence" value="ECO:0000314"/>
    <property type="project" value="HPA"/>
</dbReference>
<dbReference type="GO" id="GO:0004896">
    <property type="term" value="F:cytokine receptor activity"/>
    <property type="evidence" value="ECO:0000304"/>
    <property type="project" value="UniProtKB"/>
</dbReference>
<dbReference type="GO" id="GO:0042010">
    <property type="term" value="F:interleukin-15 receptor activity"/>
    <property type="evidence" value="ECO:0000314"/>
    <property type="project" value="UniProtKB"/>
</dbReference>
<dbReference type="GO" id="GO:0019901">
    <property type="term" value="F:protein kinase binding"/>
    <property type="evidence" value="ECO:0000353"/>
    <property type="project" value="UniProtKB"/>
</dbReference>
<dbReference type="GO" id="GO:0007259">
    <property type="term" value="P:cell surface receptor signaling pathway via JAK-STAT"/>
    <property type="evidence" value="ECO:0007669"/>
    <property type="project" value="Ensembl"/>
</dbReference>
<dbReference type="GO" id="GO:0035723">
    <property type="term" value="P:interleukin-15-mediated signaling pathway"/>
    <property type="evidence" value="ECO:0000315"/>
    <property type="project" value="UniProtKB"/>
</dbReference>
<dbReference type="GO" id="GO:0001779">
    <property type="term" value="P:natural killer cell differentiation"/>
    <property type="evidence" value="ECO:0007669"/>
    <property type="project" value="Ensembl"/>
</dbReference>
<dbReference type="GO" id="GO:0010977">
    <property type="term" value="P:negative regulation of neuron projection development"/>
    <property type="evidence" value="ECO:0007669"/>
    <property type="project" value="Ensembl"/>
</dbReference>
<dbReference type="GO" id="GO:0032825">
    <property type="term" value="P:positive regulation of natural killer cell differentiation"/>
    <property type="evidence" value="ECO:0007669"/>
    <property type="project" value="Ensembl"/>
</dbReference>
<dbReference type="GO" id="GO:0050766">
    <property type="term" value="P:positive regulation of phagocytosis"/>
    <property type="evidence" value="ECO:0000315"/>
    <property type="project" value="UniProtKB"/>
</dbReference>
<dbReference type="GO" id="GO:0031667">
    <property type="term" value="P:response to nutrient levels"/>
    <property type="evidence" value="ECO:0007669"/>
    <property type="project" value="Ensembl"/>
</dbReference>
<dbReference type="CDD" id="cd00033">
    <property type="entry name" value="CCP"/>
    <property type="match status" value="1"/>
</dbReference>
<dbReference type="FunFam" id="2.20.28.230:FF:000001">
    <property type="entry name" value="Interleukin 15 receptor subunit alpha"/>
    <property type="match status" value="1"/>
</dbReference>
<dbReference type="Gene3D" id="2.20.28.230">
    <property type="match status" value="1"/>
</dbReference>
<dbReference type="InterPro" id="IPR042372">
    <property type="entry name" value="IL15RA"/>
</dbReference>
<dbReference type="InterPro" id="IPR035976">
    <property type="entry name" value="Sushi/SCR/CCP_sf"/>
</dbReference>
<dbReference type="InterPro" id="IPR000436">
    <property type="entry name" value="Sushi_SCR_CCP_dom"/>
</dbReference>
<dbReference type="PANTHER" id="PTHR15060">
    <property type="entry name" value="INTERLEUKIN-15 RECEPTOR SUBUNIT ALPHA"/>
    <property type="match status" value="1"/>
</dbReference>
<dbReference type="PANTHER" id="PTHR15060:SF0">
    <property type="entry name" value="INTERLEUKIN-15 RECEPTOR SUBUNIT ALPHA"/>
    <property type="match status" value="1"/>
</dbReference>
<dbReference type="SMART" id="SM00032">
    <property type="entry name" value="CCP"/>
    <property type="match status" value="1"/>
</dbReference>
<dbReference type="SUPFAM" id="SSF57535">
    <property type="entry name" value="Complement control module/SCR domain"/>
    <property type="match status" value="1"/>
</dbReference>
<dbReference type="PROSITE" id="PS50923">
    <property type="entry name" value="SUSHI"/>
    <property type="match status" value="1"/>
</dbReference>
<proteinExistence type="evidence at protein level"/>
<evidence type="ECO:0000250" key="1">
    <source>
        <dbReference type="UniProtKB" id="Q60819"/>
    </source>
</evidence>
<evidence type="ECO:0000255" key="2"/>
<evidence type="ECO:0000255" key="3">
    <source>
        <dbReference type="PROSITE-ProRule" id="PRU00302"/>
    </source>
</evidence>
<evidence type="ECO:0000256" key="4">
    <source>
        <dbReference type="SAM" id="MobiDB-lite"/>
    </source>
</evidence>
<evidence type="ECO:0000269" key="5">
    <source>
    </source>
</evidence>
<evidence type="ECO:0000269" key="6">
    <source>
    </source>
</evidence>
<evidence type="ECO:0000269" key="7">
    <source>
    </source>
</evidence>
<evidence type="ECO:0000269" key="8">
    <source>
    </source>
</evidence>
<evidence type="ECO:0000269" key="9">
    <source>
    </source>
</evidence>
<evidence type="ECO:0000269" key="10">
    <source>
    </source>
</evidence>
<evidence type="ECO:0000269" key="11">
    <source>
    </source>
</evidence>
<evidence type="ECO:0000269" key="12">
    <source ref="3"/>
</evidence>
<evidence type="ECO:0000303" key="13">
    <source>
    </source>
</evidence>
<evidence type="ECO:0000303" key="14">
    <source>
    </source>
</evidence>
<evidence type="ECO:0000303" key="15">
    <source>
    </source>
</evidence>
<evidence type="ECO:0000305" key="16"/>
<evidence type="ECO:0007829" key="17">
    <source>
        <dbReference type="PDB" id="2Z3Q"/>
    </source>
</evidence>
<gene>
    <name type="primary">IL15RA</name>
</gene>
<comment type="function">
    <text evidence="1 5 7 11">High-affinity receptor for interleukin-15 (PubMed:8530383). Can signal both in cis and trans where IL15R from one subset of cells presents IL15 to neighboring IL2RG-expressing cells (By similarity). In neutrophils, binds and activates kinase SYK in response to IL15 stimulation (PubMed:15123770). In neutrophils, required for IL15-induced phagocytosis in a SYK-dependent manner (PubMed:15123770). Expression of different isoforms may alter or interfere with signal transduction (PubMed:10480910).</text>
</comment>
<comment type="function">
    <molecule>Isoform 5</molecule>
    <text evidence="5">Does not bind IL15.</text>
</comment>
<comment type="function">
    <molecule>Isoform 6</molecule>
    <text evidence="5">Does not bind IL15.</text>
</comment>
<comment type="function">
    <molecule>Isoform 7</molecule>
    <text evidence="5">Does not bind IL15.</text>
</comment>
<comment type="function">
    <molecule>Isoform 8</molecule>
    <text evidence="5">Does not bind IL15.</text>
</comment>
<comment type="subunit">
    <text evidence="7 10">The interleukin-15 receptor IL15R is a heterotrimer of IL15RA, IL2RB and IL2RG. IL15RA also self-associates (PubMed:17643103). Interacts with SYK (PubMed:15123770).</text>
</comment>
<comment type="interaction">
    <interactant intactId="EBI-980354">
        <id>Q13261</id>
    </interactant>
    <interactant intactId="EBI-980274">
        <id>P40933</id>
        <label>IL15</label>
    </interactant>
    <organismsDiffer>false</organismsDiffer>
    <experiments>5</experiments>
</comment>
<comment type="subcellular location">
    <subcellularLocation>
        <location evidence="5">Membrane</location>
        <topology evidence="5">Single-pass type I membrane protein</topology>
    </subcellularLocation>
    <subcellularLocation>
        <location evidence="5">Nucleus membrane</location>
        <topology evidence="5">Single-pass type I membrane protein</topology>
    </subcellularLocation>
    <subcellularLocation>
        <location evidence="7">Cell surface</location>
    </subcellularLocation>
    <text>Mainly found associated with the nuclear membrane.</text>
</comment>
<comment type="subcellular location">
    <molecule>Isoform 5</molecule>
    <subcellularLocation>
        <location>Endoplasmic reticulum membrane</location>
        <topology>Single-pass type I membrane protein</topology>
    </subcellularLocation>
    <subcellularLocation>
        <location>Golgi apparatus membrane</location>
        <topology>Single-pass type I membrane protein</topology>
    </subcellularLocation>
    <subcellularLocation>
        <location>Cytoplasmic vesicle membrane</location>
        <topology>Single-pass type I membrane protein</topology>
    </subcellularLocation>
    <subcellularLocation>
        <location>Membrane</location>
        <topology>Single-pass type I membrane protein</topology>
    </subcellularLocation>
    <text>Isoform 5, isoform 6, isoform 7 and isoform 8 are associated with endoplasmic reticulum, Golgi and cytoplasmic vesicles, but not with the nuclear membrane.</text>
</comment>
<comment type="subcellular location">
    <molecule>Isoform 6</molecule>
    <subcellularLocation>
        <location>Endoplasmic reticulum membrane</location>
        <topology>Single-pass type I membrane protein</topology>
    </subcellularLocation>
    <subcellularLocation>
        <location>Golgi apparatus membrane</location>
        <topology>Single-pass type I membrane protein</topology>
    </subcellularLocation>
    <subcellularLocation>
        <location>Cytoplasmic vesicle membrane</location>
        <topology>Single-pass type I membrane protein</topology>
    </subcellularLocation>
    <subcellularLocation>
        <location>Membrane</location>
        <topology>Single-pass type I membrane protein</topology>
    </subcellularLocation>
    <text>Isoform 5, isoform 6, isoform 7 and isoform 8 are associated with endoplasmic reticulum, Golgi and cytoplasmic vesicles, but not with the nuclear membrane.</text>
</comment>
<comment type="subcellular location">
    <molecule>Isoform 7</molecule>
    <subcellularLocation>
        <location>Endoplasmic reticulum membrane</location>
        <topology>Single-pass type I membrane protein</topology>
    </subcellularLocation>
    <subcellularLocation>
        <location>Golgi apparatus membrane</location>
        <topology>Single-pass type I membrane protein</topology>
    </subcellularLocation>
    <subcellularLocation>
        <location>Cytoplasmic vesicle membrane</location>
        <topology>Single-pass type I membrane protein</topology>
    </subcellularLocation>
    <subcellularLocation>
        <location>Membrane</location>
        <topology>Single-pass type I membrane protein</topology>
    </subcellularLocation>
    <text>Isoform 5, isoform 6, isoform 7 and isoform 8 are associated with endoplasmic reticulum, Golgi and cytoplasmic vesicles, but not with the nuclear membrane.</text>
</comment>
<comment type="subcellular location">
    <molecule>Isoform 8</molecule>
    <subcellularLocation>
        <location>Endoplasmic reticulum membrane</location>
        <topology>Single-pass type I membrane protein</topology>
    </subcellularLocation>
    <subcellularLocation>
        <location>Golgi apparatus membrane</location>
        <topology>Single-pass type I membrane protein</topology>
    </subcellularLocation>
    <subcellularLocation>
        <location>Cytoplasmic vesicle membrane</location>
        <topology>Single-pass type I membrane protein</topology>
    </subcellularLocation>
    <subcellularLocation>
        <location>Membrane</location>
        <topology>Single-pass type I membrane protein</topology>
    </subcellularLocation>
    <text>Isoform 5, isoform 6, isoform 7 and isoform 8 are associated with endoplasmic reticulum, Golgi and cytoplasmic vesicles, but not with the nuclear membrane.</text>
</comment>
<comment type="subcellular location">
    <molecule>Soluble interleukin-15 receptor subunit alpha</molecule>
    <subcellularLocation>
        <location evidence="8">Secreted</location>
        <location evidence="8">Extracellular space</location>
    </subcellularLocation>
</comment>
<comment type="alternative products">
    <event type="alternative splicing"/>
    <isoform>
        <id>Q13261-1</id>
        <name>1</name>
        <sequence type="displayed"/>
    </isoform>
    <isoform>
        <id>Q13261-3</id>
        <name>2</name>
        <name>delta3E1E7Il-15RA</name>
        <sequence type="described" ref="VSP_012625"/>
    </isoform>
    <isoform>
        <id>Q13261-4</id>
        <name>3</name>
        <name>E1E7'Il-15RA</name>
        <sequence type="described" ref="VSP_012626"/>
    </isoform>
    <isoform>
        <id>Q13261-5</id>
        <name>4</name>
        <name>delta3E1E7'Il-15RA</name>
        <sequence type="described" ref="VSP_012625 VSP_012626"/>
    </isoform>
    <isoform>
        <id>Q13261-6</id>
        <name>5</name>
        <name>delta2E1E7Il-15RA</name>
        <sequence type="described" ref="VSP_012624"/>
    </isoform>
    <isoform>
        <id>Q13261-7</id>
        <name>6</name>
        <name>delta2E1E7'Il-15RA</name>
        <sequence type="described" ref="VSP_012624 VSP_012626"/>
    </isoform>
    <isoform>
        <id>Q13261-8</id>
        <name>7</name>
        <name>delta2deltaE1E73Il-15RA</name>
        <sequence type="described" ref="VSP_012623"/>
    </isoform>
    <isoform>
        <id>Q13261-9</id>
        <name>8</name>
        <name>delta2delta3E1E7'Il-15RA</name>
        <sequence type="described" ref="VSP_012623 VSP_012626"/>
    </isoform>
    <isoform>
        <id>Q13261-10</id>
        <name>9</name>
        <sequence type="described" ref="VSP_055406"/>
    </isoform>
</comment>
<comment type="tissue specificity">
    <text evidence="5 6 7 11">Expressed in neutrophils (at protein level) (PubMed:15123770). Expressed in fetal brain with higher expression in the hippocampus and cerebellum than in cortex and thalamus (PubMed:12114302). Higher levels of soluble sIL-15RA form in comparison with membrane-bound forms is present in all brain structures (PubMed:12114302). Isoforms 1, 3, 4, 5, 6, 7, 8 and 9: Widely expressed (PubMed:10480910, PubMed:8530383).</text>
</comment>
<comment type="PTM">
    <text evidence="5">N-glycosylated and O-glycosylated.</text>
</comment>
<comment type="PTM">
    <text evidence="8">A soluble form (sIL-15RA) arises from proteolytic shedding of the membrane-anchored receptor (PubMed:15265897). It also binds IL-15 and thus interferes with IL-15 binding to the membrane receptor (PubMed:15265897).</text>
</comment>
<comment type="sequence caution" evidence="16">
    <conflict type="erroneous initiation">
        <sequence resource="EMBL-CDS" id="AAB88175"/>
    </conflict>
    <text>Truncated N-terminus.</text>
</comment>
<comment type="sequence caution" evidence="16">
    <conflict type="erroneous gene model prediction">
        <sequence resource="EMBL-CDS" id="EAW86419"/>
    </conflict>
</comment>
<accession>Q13261</accession>
<accession>B4E2C2</accession>
<accession>Q3B769</accession>
<accession>Q5JVA1</accession>
<accession>Q5JVA2</accession>
<accession>Q5JVA4</accession>
<accession>Q6B0J2</accession>
<accession>Q7LDR4</accession>
<accession>Q7Z609</accession>